<dbReference type="EC" id="3.6.4.-" evidence="1"/>
<dbReference type="EMBL" id="AP008934">
    <property type="protein sequence ID" value="BAE18263.1"/>
    <property type="molecule type" value="Genomic_DNA"/>
</dbReference>
<dbReference type="RefSeq" id="WP_002483095.1">
    <property type="nucleotide sequence ID" value="NZ_MTGA01000038.1"/>
</dbReference>
<dbReference type="SMR" id="Q49Y79"/>
<dbReference type="GeneID" id="66867350"/>
<dbReference type="KEGG" id="ssp:SSP1118"/>
<dbReference type="eggNOG" id="COG2255">
    <property type="taxonomic scope" value="Bacteria"/>
</dbReference>
<dbReference type="HOGENOM" id="CLU_055599_1_0_9"/>
<dbReference type="OrthoDB" id="9804478at2"/>
<dbReference type="Proteomes" id="UP000006371">
    <property type="component" value="Chromosome"/>
</dbReference>
<dbReference type="GO" id="GO:0005737">
    <property type="term" value="C:cytoplasm"/>
    <property type="evidence" value="ECO:0007669"/>
    <property type="project" value="UniProtKB-SubCell"/>
</dbReference>
<dbReference type="GO" id="GO:0048476">
    <property type="term" value="C:Holliday junction resolvase complex"/>
    <property type="evidence" value="ECO:0007669"/>
    <property type="project" value="UniProtKB-UniRule"/>
</dbReference>
<dbReference type="GO" id="GO:0005524">
    <property type="term" value="F:ATP binding"/>
    <property type="evidence" value="ECO:0007669"/>
    <property type="project" value="UniProtKB-UniRule"/>
</dbReference>
<dbReference type="GO" id="GO:0016887">
    <property type="term" value="F:ATP hydrolysis activity"/>
    <property type="evidence" value="ECO:0007669"/>
    <property type="project" value="InterPro"/>
</dbReference>
<dbReference type="GO" id="GO:0000400">
    <property type="term" value="F:four-way junction DNA binding"/>
    <property type="evidence" value="ECO:0007669"/>
    <property type="project" value="UniProtKB-UniRule"/>
</dbReference>
<dbReference type="GO" id="GO:0009378">
    <property type="term" value="F:four-way junction helicase activity"/>
    <property type="evidence" value="ECO:0007669"/>
    <property type="project" value="InterPro"/>
</dbReference>
<dbReference type="GO" id="GO:0006310">
    <property type="term" value="P:DNA recombination"/>
    <property type="evidence" value="ECO:0007669"/>
    <property type="project" value="UniProtKB-UniRule"/>
</dbReference>
<dbReference type="GO" id="GO:0006281">
    <property type="term" value="P:DNA repair"/>
    <property type="evidence" value="ECO:0007669"/>
    <property type="project" value="UniProtKB-UniRule"/>
</dbReference>
<dbReference type="CDD" id="cd00009">
    <property type="entry name" value="AAA"/>
    <property type="match status" value="1"/>
</dbReference>
<dbReference type="Gene3D" id="1.10.8.60">
    <property type="match status" value="1"/>
</dbReference>
<dbReference type="Gene3D" id="3.40.50.300">
    <property type="entry name" value="P-loop containing nucleotide triphosphate hydrolases"/>
    <property type="match status" value="1"/>
</dbReference>
<dbReference type="Gene3D" id="1.10.10.10">
    <property type="entry name" value="Winged helix-like DNA-binding domain superfamily/Winged helix DNA-binding domain"/>
    <property type="match status" value="1"/>
</dbReference>
<dbReference type="HAMAP" id="MF_00016">
    <property type="entry name" value="DNA_HJ_migration_RuvB"/>
    <property type="match status" value="1"/>
</dbReference>
<dbReference type="InterPro" id="IPR003593">
    <property type="entry name" value="AAA+_ATPase"/>
</dbReference>
<dbReference type="InterPro" id="IPR041445">
    <property type="entry name" value="AAA_lid_4"/>
</dbReference>
<dbReference type="InterPro" id="IPR004605">
    <property type="entry name" value="DNA_helicase_Holl-junc_RuvB"/>
</dbReference>
<dbReference type="InterPro" id="IPR027417">
    <property type="entry name" value="P-loop_NTPase"/>
</dbReference>
<dbReference type="InterPro" id="IPR008824">
    <property type="entry name" value="RuvB-like_N"/>
</dbReference>
<dbReference type="InterPro" id="IPR008823">
    <property type="entry name" value="RuvB_C"/>
</dbReference>
<dbReference type="InterPro" id="IPR036388">
    <property type="entry name" value="WH-like_DNA-bd_sf"/>
</dbReference>
<dbReference type="InterPro" id="IPR036390">
    <property type="entry name" value="WH_DNA-bd_sf"/>
</dbReference>
<dbReference type="NCBIfam" id="NF000868">
    <property type="entry name" value="PRK00080.1"/>
    <property type="match status" value="1"/>
</dbReference>
<dbReference type="NCBIfam" id="TIGR00635">
    <property type="entry name" value="ruvB"/>
    <property type="match status" value="1"/>
</dbReference>
<dbReference type="PANTHER" id="PTHR42848">
    <property type="match status" value="1"/>
</dbReference>
<dbReference type="PANTHER" id="PTHR42848:SF1">
    <property type="entry name" value="HOLLIDAY JUNCTION BRANCH MIGRATION COMPLEX SUBUNIT RUVB"/>
    <property type="match status" value="1"/>
</dbReference>
<dbReference type="Pfam" id="PF17864">
    <property type="entry name" value="AAA_lid_4"/>
    <property type="match status" value="1"/>
</dbReference>
<dbReference type="Pfam" id="PF05491">
    <property type="entry name" value="RuvB_C"/>
    <property type="match status" value="1"/>
</dbReference>
<dbReference type="Pfam" id="PF05496">
    <property type="entry name" value="RuvB_N"/>
    <property type="match status" value="1"/>
</dbReference>
<dbReference type="SMART" id="SM00382">
    <property type="entry name" value="AAA"/>
    <property type="match status" value="1"/>
</dbReference>
<dbReference type="SUPFAM" id="SSF52540">
    <property type="entry name" value="P-loop containing nucleoside triphosphate hydrolases"/>
    <property type="match status" value="1"/>
</dbReference>
<dbReference type="SUPFAM" id="SSF46785">
    <property type="entry name" value="Winged helix' DNA-binding domain"/>
    <property type="match status" value="1"/>
</dbReference>
<sequence length="334" mass="37655">MDDRMVDQSMHDEESSFELSLRPTKLRQYIGQSTIKSNLEVFIKAAKMRQEPLDHVLLFGPPGLGKTTLSNIIANEMEVNIRIISGPSIERPGDLAAILSSLQPGDVLFIDEIHRLSSVVEEVLYPAMEDFFLDIVIGKGEEARSIRIDLPPFTLIGATTRAGSLTAPLRDRFGVHLRLEYYQELELKEIIVRTAEVLGTSIDDESAIELAKRSRGTPRVANRLLKRVRDFQQVNEDELISIATTRASLQLLQVDDEGLDYIDHKMMNCILEQYKGGPVGLDTIAVSIGEERVTIEDVYEPFLIQKGFIERTPRGRKATPYAFEHFSKKNGKKE</sequence>
<gene>
    <name evidence="1" type="primary">ruvB</name>
    <name type="ordered locus">SSP1118</name>
</gene>
<comment type="function">
    <text evidence="1">The RuvA-RuvB-RuvC complex processes Holliday junction (HJ) DNA during genetic recombination and DNA repair, while the RuvA-RuvB complex plays an important role in the rescue of blocked DNA replication forks via replication fork reversal (RFR). RuvA specifically binds to HJ cruciform DNA, conferring on it an open structure. The RuvB hexamer acts as an ATP-dependent pump, pulling dsDNA into and through the RuvAB complex. RuvB forms 2 homohexamers on either side of HJ DNA bound by 1 or 2 RuvA tetramers; 4 subunits per hexamer contact DNA at a time. Coordinated motions by a converter formed by DNA-disengaged RuvB subunits stimulates ATP hydrolysis and nucleotide exchange. Immobilization of the converter enables RuvB to convert the ATP-contained energy into a lever motion, pulling 2 nucleotides of DNA out of the RuvA tetramer per ATP hydrolyzed, thus driving DNA branch migration. The RuvB motors rotate together with the DNA substrate, which together with the progressing nucleotide cycle form the mechanistic basis for DNA recombination by continuous HJ branch migration. Branch migration allows RuvC to scan DNA until it finds its consensus sequence, where it cleaves and resolves cruciform DNA.</text>
</comment>
<comment type="catalytic activity">
    <reaction evidence="1">
        <text>ATP + H2O = ADP + phosphate + H(+)</text>
        <dbReference type="Rhea" id="RHEA:13065"/>
        <dbReference type="ChEBI" id="CHEBI:15377"/>
        <dbReference type="ChEBI" id="CHEBI:15378"/>
        <dbReference type="ChEBI" id="CHEBI:30616"/>
        <dbReference type="ChEBI" id="CHEBI:43474"/>
        <dbReference type="ChEBI" id="CHEBI:456216"/>
    </reaction>
</comment>
<comment type="subunit">
    <text evidence="1">Homohexamer. Forms an RuvA(8)-RuvB(12)-Holliday junction (HJ) complex. HJ DNA is sandwiched between 2 RuvA tetramers; dsDNA enters through RuvA and exits via RuvB. An RuvB hexamer assembles on each DNA strand where it exits the tetramer. Each RuvB hexamer is contacted by two RuvA subunits (via domain III) on 2 adjacent RuvB subunits; this complex drives branch migration. In the full resolvosome a probable DNA-RuvA(4)-RuvB(12)-RuvC(2) complex forms which resolves the HJ.</text>
</comment>
<comment type="subcellular location">
    <subcellularLocation>
        <location evidence="1">Cytoplasm</location>
    </subcellularLocation>
</comment>
<comment type="domain">
    <text evidence="1">Has 3 domains, the large (RuvB-L) and small ATPase (RuvB-S) domains and the C-terminal head (RuvB-H) domain. The head domain binds DNA, while the ATPase domains jointly bind ATP, ADP or are empty depending on the state of the subunit in the translocation cycle. During a single DNA translocation step the structure of each domain remains the same, but their relative positions change.</text>
</comment>
<comment type="similarity">
    <text evidence="1">Belongs to the RuvB family.</text>
</comment>
<reference key="1">
    <citation type="journal article" date="2005" name="Proc. Natl. Acad. Sci. U.S.A.">
        <title>Whole genome sequence of Staphylococcus saprophyticus reveals the pathogenesis of uncomplicated urinary tract infection.</title>
        <authorList>
            <person name="Kuroda M."/>
            <person name="Yamashita A."/>
            <person name="Hirakawa H."/>
            <person name="Kumano M."/>
            <person name="Morikawa K."/>
            <person name="Higashide M."/>
            <person name="Maruyama A."/>
            <person name="Inose Y."/>
            <person name="Matoba K."/>
            <person name="Toh H."/>
            <person name="Kuhara S."/>
            <person name="Hattori M."/>
            <person name="Ohta T."/>
        </authorList>
    </citation>
    <scope>NUCLEOTIDE SEQUENCE [LARGE SCALE GENOMIC DNA]</scope>
    <source>
        <strain>ATCC 15305 / DSM 20229 / NCIMB 8711 / NCTC 7292 / S-41</strain>
    </source>
</reference>
<accession>Q49Y79</accession>
<organism>
    <name type="scientific">Staphylococcus saprophyticus subsp. saprophyticus (strain ATCC 15305 / DSM 20229 / NCIMB 8711 / NCTC 7292 / S-41)</name>
    <dbReference type="NCBI Taxonomy" id="342451"/>
    <lineage>
        <taxon>Bacteria</taxon>
        <taxon>Bacillati</taxon>
        <taxon>Bacillota</taxon>
        <taxon>Bacilli</taxon>
        <taxon>Bacillales</taxon>
        <taxon>Staphylococcaceae</taxon>
        <taxon>Staphylococcus</taxon>
    </lineage>
</organism>
<evidence type="ECO:0000255" key="1">
    <source>
        <dbReference type="HAMAP-Rule" id="MF_00016"/>
    </source>
</evidence>
<feature type="chain" id="PRO_0000235411" description="Holliday junction branch migration complex subunit RuvB">
    <location>
        <begin position="1"/>
        <end position="334"/>
    </location>
</feature>
<feature type="region of interest" description="Large ATPase domain (RuvB-L)" evidence="1">
    <location>
        <begin position="1"/>
        <end position="182"/>
    </location>
</feature>
<feature type="region of interest" description="Small ATPAse domain (RuvB-S)" evidence="1">
    <location>
        <begin position="183"/>
        <end position="253"/>
    </location>
</feature>
<feature type="region of interest" description="Head domain (RuvB-H)" evidence="1">
    <location>
        <begin position="256"/>
        <end position="334"/>
    </location>
</feature>
<feature type="binding site" evidence="1">
    <location>
        <position position="21"/>
    </location>
    <ligand>
        <name>ATP</name>
        <dbReference type="ChEBI" id="CHEBI:30616"/>
    </ligand>
</feature>
<feature type="binding site" evidence="1">
    <location>
        <position position="22"/>
    </location>
    <ligand>
        <name>ATP</name>
        <dbReference type="ChEBI" id="CHEBI:30616"/>
    </ligand>
</feature>
<feature type="binding site" evidence="1">
    <location>
        <position position="63"/>
    </location>
    <ligand>
        <name>ATP</name>
        <dbReference type="ChEBI" id="CHEBI:30616"/>
    </ligand>
</feature>
<feature type="binding site" evidence="1">
    <location>
        <position position="66"/>
    </location>
    <ligand>
        <name>ATP</name>
        <dbReference type="ChEBI" id="CHEBI:30616"/>
    </ligand>
</feature>
<feature type="binding site" evidence="1">
    <location>
        <position position="67"/>
    </location>
    <ligand>
        <name>ATP</name>
        <dbReference type="ChEBI" id="CHEBI:30616"/>
    </ligand>
</feature>
<feature type="binding site" evidence="1">
    <location>
        <position position="67"/>
    </location>
    <ligand>
        <name>Mg(2+)</name>
        <dbReference type="ChEBI" id="CHEBI:18420"/>
    </ligand>
</feature>
<feature type="binding site" evidence="1">
    <location>
        <position position="68"/>
    </location>
    <ligand>
        <name>ATP</name>
        <dbReference type="ChEBI" id="CHEBI:30616"/>
    </ligand>
</feature>
<feature type="binding site" evidence="1">
    <location>
        <begin position="129"/>
        <end position="131"/>
    </location>
    <ligand>
        <name>ATP</name>
        <dbReference type="ChEBI" id="CHEBI:30616"/>
    </ligand>
</feature>
<feature type="binding site" evidence="1">
    <location>
        <position position="172"/>
    </location>
    <ligand>
        <name>ATP</name>
        <dbReference type="ChEBI" id="CHEBI:30616"/>
    </ligand>
</feature>
<feature type="binding site" evidence="1">
    <location>
        <position position="182"/>
    </location>
    <ligand>
        <name>ATP</name>
        <dbReference type="ChEBI" id="CHEBI:30616"/>
    </ligand>
</feature>
<feature type="binding site" evidence="1">
    <location>
        <position position="219"/>
    </location>
    <ligand>
        <name>ATP</name>
        <dbReference type="ChEBI" id="CHEBI:30616"/>
    </ligand>
</feature>
<feature type="binding site" evidence="1">
    <location>
        <position position="292"/>
    </location>
    <ligand>
        <name>DNA</name>
        <dbReference type="ChEBI" id="CHEBI:16991"/>
    </ligand>
</feature>
<feature type="binding site" evidence="1">
    <location>
        <position position="311"/>
    </location>
    <ligand>
        <name>DNA</name>
        <dbReference type="ChEBI" id="CHEBI:16991"/>
    </ligand>
</feature>
<feature type="binding site" evidence="1">
    <location>
        <position position="316"/>
    </location>
    <ligand>
        <name>DNA</name>
        <dbReference type="ChEBI" id="CHEBI:16991"/>
    </ligand>
</feature>
<protein>
    <recommendedName>
        <fullName evidence="1">Holliday junction branch migration complex subunit RuvB</fullName>
        <ecNumber evidence="1">3.6.4.-</ecNumber>
    </recommendedName>
</protein>
<keyword id="KW-0067">ATP-binding</keyword>
<keyword id="KW-0963">Cytoplasm</keyword>
<keyword id="KW-0227">DNA damage</keyword>
<keyword id="KW-0233">DNA recombination</keyword>
<keyword id="KW-0234">DNA repair</keyword>
<keyword id="KW-0238">DNA-binding</keyword>
<keyword id="KW-0378">Hydrolase</keyword>
<keyword id="KW-0547">Nucleotide-binding</keyword>
<keyword id="KW-1185">Reference proteome</keyword>
<name>RUVB_STAS1</name>
<proteinExistence type="inferred from homology"/>